<proteinExistence type="evidence at protein level"/>
<keyword id="KW-0150">Chloroplast</keyword>
<keyword id="KW-0456">Lyase</keyword>
<keyword id="KW-0460">Magnesium</keyword>
<keyword id="KW-0479">Metal-binding</keyword>
<keyword id="KW-0934">Plastid</keyword>
<keyword id="KW-0809">Transit peptide</keyword>
<gene>
    <name evidence="4" type="primary">KSL2</name>
</gene>
<dbReference type="EC" id="4.2.3.-" evidence="3"/>
<dbReference type="EMBL" id="KU180505">
    <property type="protein sequence ID" value="APJ36377.1"/>
    <property type="molecule type" value="mRNA"/>
</dbReference>
<dbReference type="SMR" id="A0A1X9ISP7"/>
<dbReference type="BRENDA" id="4.2.3.B70">
    <property type="organism ID" value="15342"/>
</dbReference>
<dbReference type="UniPathway" id="UPA00213"/>
<dbReference type="GO" id="GO:0009507">
    <property type="term" value="C:chloroplast"/>
    <property type="evidence" value="ECO:0007669"/>
    <property type="project" value="UniProtKB-SubCell"/>
</dbReference>
<dbReference type="GO" id="GO:0000287">
    <property type="term" value="F:magnesium ion binding"/>
    <property type="evidence" value="ECO:0007669"/>
    <property type="project" value="InterPro"/>
</dbReference>
<dbReference type="GO" id="GO:0010333">
    <property type="term" value="F:terpene synthase activity"/>
    <property type="evidence" value="ECO:0007669"/>
    <property type="project" value="InterPro"/>
</dbReference>
<dbReference type="GO" id="GO:0033331">
    <property type="term" value="P:ent-kaurene metabolic process"/>
    <property type="evidence" value="ECO:0000314"/>
    <property type="project" value="UniProtKB"/>
</dbReference>
<dbReference type="GO" id="GO:0009686">
    <property type="term" value="P:gibberellin biosynthetic process"/>
    <property type="evidence" value="ECO:0007669"/>
    <property type="project" value="TreeGrafter"/>
</dbReference>
<dbReference type="GO" id="GO:0016114">
    <property type="term" value="P:terpenoid biosynthetic process"/>
    <property type="evidence" value="ECO:0000314"/>
    <property type="project" value="UniProtKB"/>
</dbReference>
<dbReference type="FunFam" id="1.50.10.160:FF:000002">
    <property type="entry name" value="cis-abienol synthase, chloroplastic"/>
    <property type="match status" value="1"/>
</dbReference>
<dbReference type="FunFam" id="1.50.10.130:FF:000002">
    <property type="entry name" value="Ent-copalyl diphosphate synthase, chloroplastic"/>
    <property type="match status" value="1"/>
</dbReference>
<dbReference type="FunFam" id="1.10.600.10:FF:000005">
    <property type="entry name" value="Ent-kaur-16-ene synthase, chloroplastic"/>
    <property type="match status" value="1"/>
</dbReference>
<dbReference type="Gene3D" id="1.50.10.160">
    <property type="match status" value="1"/>
</dbReference>
<dbReference type="Gene3D" id="1.10.600.10">
    <property type="entry name" value="Farnesyl Diphosphate Synthase"/>
    <property type="match status" value="1"/>
</dbReference>
<dbReference type="Gene3D" id="1.50.10.130">
    <property type="entry name" value="Terpene synthase, N-terminal domain"/>
    <property type="match status" value="1"/>
</dbReference>
<dbReference type="InterPro" id="IPR008949">
    <property type="entry name" value="Isoprenoid_synthase_dom_sf"/>
</dbReference>
<dbReference type="InterPro" id="IPR001906">
    <property type="entry name" value="Terpene_synth_N"/>
</dbReference>
<dbReference type="InterPro" id="IPR036965">
    <property type="entry name" value="Terpene_synth_N_sf"/>
</dbReference>
<dbReference type="InterPro" id="IPR050148">
    <property type="entry name" value="Terpene_synthase-like"/>
</dbReference>
<dbReference type="InterPro" id="IPR005630">
    <property type="entry name" value="Terpene_synthase_metal-bd"/>
</dbReference>
<dbReference type="InterPro" id="IPR008930">
    <property type="entry name" value="Terpenoid_cyclase/PrenylTrfase"/>
</dbReference>
<dbReference type="PANTHER" id="PTHR31739">
    <property type="entry name" value="ENT-COPALYL DIPHOSPHATE SYNTHASE, CHLOROPLASTIC"/>
    <property type="match status" value="1"/>
</dbReference>
<dbReference type="PANTHER" id="PTHR31739:SF3">
    <property type="entry name" value="ENT-KAUR-16-ENE SYNTHASE, CHLOROPLASTIC"/>
    <property type="match status" value="1"/>
</dbReference>
<dbReference type="Pfam" id="PF01397">
    <property type="entry name" value="Terpene_synth"/>
    <property type="match status" value="1"/>
</dbReference>
<dbReference type="Pfam" id="PF03936">
    <property type="entry name" value="Terpene_synth_C"/>
    <property type="match status" value="1"/>
</dbReference>
<dbReference type="SFLD" id="SFLDG01014">
    <property type="entry name" value="Terpene_Cyclase_Like_1_N-term"/>
    <property type="match status" value="1"/>
</dbReference>
<dbReference type="SUPFAM" id="SSF48239">
    <property type="entry name" value="Terpenoid cyclases/Protein prenyltransferases"/>
    <property type="match status" value="2"/>
</dbReference>
<dbReference type="SUPFAM" id="SSF48576">
    <property type="entry name" value="Terpenoid synthases"/>
    <property type="match status" value="1"/>
</dbReference>
<evidence type="ECO:0000250" key="1">
    <source>
        <dbReference type="UniProtKB" id="Q40577"/>
    </source>
</evidence>
<evidence type="ECO:0000255" key="2"/>
<evidence type="ECO:0000269" key="3">
    <source>
    </source>
</evidence>
<evidence type="ECO:0000303" key="4">
    <source>
    </source>
</evidence>
<evidence type="ECO:0000305" key="5"/>
<protein>
    <recommendedName>
        <fullName evidence="4">Kaurene synthase like 2, chloroplastic</fullName>
        <ecNumber evidence="3">4.2.3.-</ecNumber>
    </recommendedName>
    <alternativeName>
        <fullName evidence="5">Ent-isopimaradiene like synthase</fullName>
    </alternativeName>
</protein>
<organism>
    <name type="scientific">Isodon rubescens</name>
    <name type="common">Rabdosia rubescens</name>
    <dbReference type="NCBI Taxonomy" id="587669"/>
    <lineage>
        <taxon>Eukaryota</taxon>
        <taxon>Viridiplantae</taxon>
        <taxon>Streptophyta</taxon>
        <taxon>Embryophyta</taxon>
        <taxon>Tracheophyta</taxon>
        <taxon>Spermatophyta</taxon>
        <taxon>Magnoliopsida</taxon>
        <taxon>eudicotyledons</taxon>
        <taxon>Gunneridae</taxon>
        <taxon>Pentapetalae</taxon>
        <taxon>asterids</taxon>
        <taxon>lamiids</taxon>
        <taxon>Lamiales</taxon>
        <taxon>Lamiaceae</taxon>
        <taxon>Nepetoideae</taxon>
        <taxon>Ocimeae</taxon>
        <taxon>Isodoninae</taxon>
        <taxon>Isodon</taxon>
    </lineage>
</organism>
<accession>A0A1X9ISP7</accession>
<reference key="1">
    <citation type="journal article" date="2017" name="Plant Physiol.">
        <title>Functional diversification of kaurene synthase-like genes in Isodon rubescens.</title>
        <authorList>
            <person name="Jin B."/>
            <person name="Cui G."/>
            <person name="Guo J."/>
            <person name="Tang J."/>
            <person name="Duan L."/>
            <person name="Lin H."/>
            <person name="Shen Y."/>
            <person name="Chen T."/>
            <person name="Zhang H."/>
            <person name="Huang L."/>
        </authorList>
    </citation>
    <scope>NUCLEOTIDE SEQUENCE [MRNA]</scope>
    <scope>FUNCTION</scope>
    <scope>CATALYTIC ACTIVITY</scope>
    <scope>PATHWAY</scope>
    <scope>TISSUE SPECIFICITY</scope>
</reference>
<sequence>MSLLLSNSALVGPKFRSSRISHASASLDIGLQRATSPQNASVATCFEETKGRIAKLFHKNELSVSTYDTAWVAMVPSPTSSEEPCFPACLNWLLENQCHDGSWARPHHHHMLKKDVLSSTLACILALKKWGVGEEQISRGLHFVELNFASATEKGQITPMGFDIIFPAMLDNARGLSLNLQLEPTTLNDLIYKRDLELKRCNQSNSAEKEVYWAHIAEGMGKLQDWESVMKYQRKNGSLFNSPSTTAAAFIALRNSDCLNYLYSAMNKFGSAVPAVYPLDIYSQLCLVDNLERLGISRFFSTEIQSVLDDTYRCWLDGDEEIFMDASTCALAFRTLRMNGYSVTSDSFTKAVQDCFSSSIPSHMRDVNTTLELYRASEIMLYPDEIELEKQHSRLRSLLEHELSSGSIQSSQLNAVVKHALDYPFYAILDRMAKKKTIEHYEFDDTRILKTSFCSPTFGNKDFLSLSVEDYNRCQAIHRKEFRELDRWFKETKLDELKFARQKYTYSYCTAAASFASPELSDARMSWAKNSVLIGIVDDLFDVKGSVEEKQNLIKLVELWDVDVSTQCCSQSVQIIFSALRSTICEIGDKGFKIQGRSITDHIIAIWLDVLYNMMKESEWAENKSVPTIDEYMKISHVSSGLGPVVLPSLYLVGPKLSQEMVNHSEYHSLFKLMSTCCRLLNDIRSYEREVEGGKPNALALYRVSSGGEMMMSKEAAISELERLIERQRRELMRTILEESVIPKCCKEIFGH</sequence>
<feature type="transit peptide" description="Chloroplast" evidence="2">
    <location>
        <begin position="1"/>
        <end position="28"/>
    </location>
</feature>
<feature type="chain" id="PRO_0000452391" description="Kaurene synthase like 2, chloroplastic">
    <location>
        <begin position="29"/>
        <end position="752" status="greater than"/>
    </location>
</feature>
<feature type="short sequence motif" description="DDXXD motif" evidence="5">
    <location>
        <begin position="538"/>
        <end position="542"/>
    </location>
</feature>
<feature type="binding site" evidence="1">
    <location>
        <position position="538"/>
    </location>
    <ligand>
        <name>Mg(2+)</name>
        <dbReference type="ChEBI" id="CHEBI:18420"/>
        <label>1</label>
    </ligand>
</feature>
<feature type="binding site" evidence="1">
    <location>
        <position position="538"/>
    </location>
    <ligand>
        <name>Mg(2+)</name>
        <dbReference type="ChEBI" id="CHEBI:18420"/>
        <label>2</label>
    </ligand>
</feature>
<feature type="binding site" evidence="1">
    <location>
        <position position="542"/>
    </location>
    <ligand>
        <name>Mg(2+)</name>
        <dbReference type="ChEBI" id="CHEBI:18420"/>
        <label>1</label>
    </ligand>
</feature>
<feature type="binding site" evidence="1">
    <location>
        <position position="542"/>
    </location>
    <ligand>
        <name>Mg(2+)</name>
        <dbReference type="ChEBI" id="CHEBI:18420"/>
        <label>2</label>
    </ligand>
</feature>
<feature type="binding site" evidence="1">
    <location>
        <position position="682"/>
    </location>
    <ligand>
        <name>Mg(2+)</name>
        <dbReference type="ChEBI" id="CHEBI:18420"/>
        <label>3</label>
    </ligand>
</feature>
<feature type="binding site" evidence="1">
    <location>
        <position position="690"/>
    </location>
    <ligand>
        <name>Mg(2+)</name>
        <dbReference type="ChEBI" id="CHEBI:18420"/>
        <label>3</label>
    </ligand>
</feature>
<feature type="non-terminal residue" evidence="5">
    <location>
        <position position="752"/>
    </location>
</feature>
<name>KSL2_ISORU</name>
<comment type="function">
    <text evidence="3">Involved in the biosynthesis of ent-kaurene diterpenoids natural products such as oridonin, miltiradiene, eriocalyxin B and nezukol, known to exhibit antitumor, anti-inflammatory and antibacterial activities (PubMed:28381502). Catalyzes the conversion of ent-copalyl diphosphate (ent-CPP) to ent-isopimaradiene like compounds (PubMed:28381502).</text>
</comment>
<comment type="cofactor">
    <cofactor evidence="1">
        <name>Mg(2+)</name>
        <dbReference type="ChEBI" id="CHEBI:18420"/>
    </cofactor>
    <text evidence="1">Binds 3 Mg(2+) ions per subunit.</text>
</comment>
<comment type="pathway">
    <text evidence="3">Secondary metabolite biosynthesis; terpenoid biosynthesis.</text>
</comment>
<comment type="subcellular location">
    <subcellularLocation>
        <location evidence="2">Plastid</location>
        <location evidence="2">Chloroplast</location>
    </subcellularLocation>
</comment>
<comment type="tissue specificity">
    <text evidence="3">Highly expressed in leaves.</text>
</comment>
<comment type="domain">
    <text evidence="5">The Asp-Asp-Xaa-Xaa-Asp/Glu (DDXXD/E) motif is important for the catalytic activity, presumably through binding to Mg(2+).</text>
</comment>
<comment type="miscellaneous">
    <text evidence="3">Abietane diterpenoids (e.g. miltiradiene, abietatriene and ferruginol) accumulate specifically in the periderm of roots (PubMed:28381502). The ent-kaurene diterpenoid oridonin, main constituent of Isodon rubescens, accumulates in leaves (PubMed:28381502).</text>
</comment>
<comment type="similarity">
    <text evidence="5">Belongs to the terpene synthase family.</text>
</comment>